<protein>
    <recommendedName>
        <fullName evidence="1">Large ribosomal subunit protein bL31B</fullName>
    </recommendedName>
    <alternativeName>
        <fullName evidence="2">50S ribosomal protein L31 type B</fullName>
    </alternativeName>
</protein>
<keyword id="KW-0687">Ribonucleoprotein</keyword>
<keyword id="KW-0689">Ribosomal protein</keyword>
<reference key="1">
    <citation type="journal article" date="2008" name="J. Bacteriol.">
        <title>Genome of the actinomycete plant pathogen Clavibacter michiganensis subsp. sepedonicus suggests recent niche adaptation.</title>
        <authorList>
            <person name="Bentley S.D."/>
            <person name="Corton C."/>
            <person name="Brown S.E."/>
            <person name="Barron A."/>
            <person name="Clark L."/>
            <person name="Doggett J."/>
            <person name="Harris B."/>
            <person name="Ormond D."/>
            <person name="Quail M.A."/>
            <person name="May G."/>
            <person name="Francis D."/>
            <person name="Knudson D."/>
            <person name="Parkhill J."/>
            <person name="Ishimaru C.A."/>
        </authorList>
    </citation>
    <scope>NUCLEOTIDE SEQUENCE [LARGE SCALE GENOMIC DNA]</scope>
    <source>
        <strain>ATCC 33113 / DSM 20744 / JCM 9667 / LMG 2889 / ICMP 2535 / C-1</strain>
    </source>
</reference>
<feature type="chain" id="PRO_1000126798" description="Large ribosomal subunit protein bL31B">
    <location>
        <begin position="1"/>
        <end position="85"/>
    </location>
</feature>
<sequence length="85" mass="9510">MKTDIHPKYAPVVFRDLASGATFLTRSTVSSSKTIVWEDGNEYAVIDVEISSESHPFYTGKQRIMDSAGRVEKFNSRYAGFGTKK</sequence>
<organism>
    <name type="scientific">Clavibacter sepedonicus</name>
    <name type="common">Clavibacter michiganensis subsp. sepedonicus</name>
    <dbReference type="NCBI Taxonomy" id="31964"/>
    <lineage>
        <taxon>Bacteria</taxon>
        <taxon>Bacillati</taxon>
        <taxon>Actinomycetota</taxon>
        <taxon>Actinomycetes</taxon>
        <taxon>Micrococcales</taxon>
        <taxon>Microbacteriaceae</taxon>
        <taxon>Clavibacter</taxon>
    </lineage>
</organism>
<accession>B0REG5</accession>
<proteinExistence type="inferred from homology"/>
<gene>
    <name evidence="1" type="primary">rpmE2</name>
    <name type="ordered locus">CMS1960</name>
</gene>
<comment type="subunit">
    <text evidence="1">Part of the 50S ribosomal subunit.</text>
</comment>
<comment type="similarity">
    <text evidence="1">Belongs to the bacterial ribosomal protein bL31 family. Type B subfamily.</text>
</comment>
<evidence type="ECO:0000255" key="1">
    <source>
        <dbReference type="HAMAP-Rule" id="MF_00502"/>
    </source>
</evidence>
<evidence type="ECO:0000305" key="2"/>
<name>RL31B_CLASE</name>
<dbReference type="EMBL" id="AM849034">
    <property type="protein sequence ID" value="CAQ02057.1"/>
    <property type="molecule type" value="Genomic_DNA"/>
</dbReference>
<dbReference type="RefSeq" id="WP_012299288.1">
    <property type="nucleotide sequence ID" value="NZ_MZMN01000003.1"/>
</dbReference>
<dbReference type="SMR" id="B0REG5"/>
<dbReference type="STRING" id="31964.CMS1960"/>
<dbReference type="KEGG" id="cms:CMS1960"/>
<dbReference type="eggNOG" id="COG0254">
    <property type="taxonomic scope" value="Bacteria"/>
</dbReference>
<dbReference type="HOGENOM" id="CLU_114306_2_2_11"/>
<dbReference type="OrthoDB" id="9803251at2"/>
<dbReference type="Proteomes" id="UP000001318">
    <property type="component" value="Chromosome"/>
</dbReference>
<dbReference type="GO" id="GO:1990904">
    <property type="term" value="C:ribonucleoprotein complex"/>
    <property type="evidence" value="ECO:0007669"/>
    <property type="project" value="UniProtKB-KW"/>
</dbReference>
<dbReference type="GO" id="GO:0005840">
    <property type="term" value="C:ribosome"/>
    <property type="evidence" value="ECO:0007669"/>
    <property type="project" value="UniProtKB-KW"/>
</dbReference>
<dbReference type="GO" id="GO:0003735">
    <property type="term" value="F:structural constituent of ribosome"/>
    <property type="evidence" value="ECO:0007669"/>
    <property type="project" value="InterPro"/>
</dbReference>
<dbReference type="GO" id="GO:0006412">
    <property type="term" value="P:translation"/>
    <property type="evidence" value="ECO:0007669"/>
    <property type="project" value="UniProtKB-UniRule"/>
</dbReference>
<dbReference type="Gene3D" id="4.10.830.30">
    <property type="entry name" value="Ribosomal protein L31"/>
    <property type="match status" value="1"/>
</dbReference>
<dbReference type="HAMAP" id="MF_00502">
    <property type="entry name" value="Ribosomal_bL31_2"/>
    <property type="match status" value="1"/>
</dbReference>
<dbReference type="InterPro" id="IPR034704">
    <property type="entry name" value="Ribosomal_bL28/bL31-like_sf"/>
</dbReference>
<dbReference type="InterPro" id="IPR002150">
    <property type="entry name" value="Ribosomal_bL31"/>
</dbReference>
<dbReference type="InterPro" id="IPR027493">
    <property type="entry name" value="Ribosomal_bL31_B"/>
</dbReference>
<dbReference type="InterPro" id="IPR042105">
    <property type="entry name" value="Ribosomal_bL31_sf"/>
</dbReference>
<dbReference type="NCBIfam" id="TIGR00105">
    <property type="entry name" value="L31"/>
    <property type="match status" value="1"/>
</dbReference>
<dbReference type="NCBIfam" id="NF002462">
    <property type="entry name" value="PRK01678.1"/>
    <property type="match status" value="1"/>
</dbReference>
<dbReference type="PANTHER" id="PTHR33280">
    <property type="entry name" value="50S RIBOSOMAL PROTEIN L31, CHLOROPLASTIC"/>
    <property type="match status" value="1"/>
</dbReference>
<dbReference type="PANTHER" id="PTHR33280:SF1">
    <property type="entry name" value="LARGE RIBOSOMAL SUBUNIT PROTEIN BL31C"/>
    <property type="match status" value="1"/>
</dbReference>
<dbReference type="Pfam" id="PF01197">
    <property type="entry name" value="Ribosomal_L31"/>
    <property type="match status" value="1"/>
</dbReference>
<dbReference type="PRINTS" id="PR01249">
    <property type="entry name" value="RIBOSOMALL31"/>
</dbReference>
<dbReference type="SUPFAM" id="SSF143800">
    <property type="entry name" value="L28p-like"/>
    <property type="match status" value="1"/>
</dbReference>
<dbReference type="PROSITE" id="PS01143">
    <property type="entry name" value="RIBOSOMAL_L31"/>
    <property type="match status" value="1"/>
</dbReference>